<name>ASGL1_XENLA</name>
<dbReference type="EC" id="3.4.19.5" evidence="2"/>
<dbReference type="EC" id="3.5.1.1" evidence="2"/>
<dbReference type="EMBL" id="BC074198">
    <property type="protein sequence ID" value="AAH74198.1"/>
    <property type="molecule type" value="mRNA"/>
</dbReference>
<dbReference type="RefSeq" id="NP_001086107.1">
    <property type="nucleotide sequence ID" value="NM_001092638.1"/>
</dbReference>
<dbReference type="SMR" id="Q6GM78"/>
<dbReference type="GeneID" id="444536"/>
<dbReference type="KEGG" id="xla:444536"/>
<dbReference type="AGR" id="Xenbase:XB-GENE-989505"/>
<dbReference type="CTD" id="444536"/>
<dbReference type="Xenbase" id="XB-GENE-989505">
    <property type="gene designation" value="asrgl1.L"/>
</dbReference>
<dbReference type="OrthoDB" id="2262349at2759"/>
<dbReference type="Proteomes" id="UP000186698">
    <property type="component" value="Chromosome 5L"/>
</dbReference>
<dbReference type="Bgee" id="444536">
    <property type="expression patterns" value="Expressed in egg cell and 19 other cell types or tissues"/>
</dbReference>
<dbReference type="GO" id="GO:0005737">
    <property type="term" value="C:cytoplasm"/>
    <property type="evidence" value="ECO:0000250"/>
    <property type="project" value="UniProtKB"/>
</dbReference>
<dbReference type="GO" id="GO:0001917">
    <property type="term" value="C:photoreceptor inner segment"/>
    <property type="evidence" value="ECO:0000250"/>
    <property type="project" value="UniProtKB"/>
</dbReference>
<dbReference type="GO" id="GO:0004067">
    <property type="term" value="F:asparaginase activity"/>
    <property type="evidence" value="ECO:0000250"/>
    <property type="project" value="UniProtKB"/>
</dbReference>
<dbReference type="GO" id="GO:0008798">
    <property type="term" value="F:beta-aspartyl-peptidase activity"/>
    <property type="evidence" value="ECO:0000250"/>
    <property type="project" value="UniProtKB"/>
</dbReference>
<dbReference type="GO" id="GO:0033345">
    <property type="term" value="P:asparagine catabolic process via L-aspartate"/>
    <property type="evidence" value="ECO:0000250"/>
    <property type="project" value="UniProtKB"/>
</dbReference>
<dbReference type="GO" id="GO:0006508">
    <property type="term" value="P:proteolysis"/>
    <property type="evidence" value="ECO:0007669"/>
    <property type="project" value="UniProtKB-KW"/>
</dbReference>
<dbReference type="CDD" id="cd04702">
    <property type="entry name" value="ASRGL1_like"/>
    <property type="match status" value="1"/>
</dbReference>
<dbReference type="FunFam" id="3.60.20.30:FF:000001">
    <property type="entry name" value="Isoaspartyl peptidase/L-asparaginase"/>
    <property type="match status" value="1"/>
</dbReference>
<dbReference type="Gene3D" id="3.60.20.30">
    <property type="entry name" value="(Glycosyl)asparaginase"/>
    <property type="match status" value="1"/>
</dbReference>
<dbReference type="InterPro" id="IPR033844">
    <property type="entry name" value="ASRGL1_meta"/>
</dbReference>
<dbReference type="InterPro" id="IPR029055">
    <property type="entry name" value="Ntn_hydrolases_N"/>
</dbReference>
<dbReference type="InterPro" id="IPR000246">
    <property type="entry name" value="Peptidase_T2"/>
</dbReference>
<dbReference type="PANTHER" id="PTHR10188:SF41">
    <property type="entry name" value="ISOASPARTYL PEPTIDASE_L-ASPARAGINASE"/>
    <property type="match status" value="1"/>
</dbReference>
<dbReference type="PANTHER" id="PTHR10188">
    <property type="entry name" value="L-ASPARAGINASE"/>
    <property type="match status" value="1"/>
</dbReference>
<dbReference type="Pfam" id="PF01112">
    <property type="entry name" value="Asparaginase_2"/>
    <property type="match status" value="1"/>
</dbReference>
<dbReference type="SUPFAM" id="SSF56235">
    <property type="entry name" value="N-terminal nucleophile aminohydrolases (Ntn hydrolases)"/>
    <property type="match status" value="1"/>
</dbReference>
<comment type="function">
    <text evidence="1">Has both L-asparaginase and beta-aspartyl peptidase activity. Does not have aspartylglucosaminidase activity and is inactive toward GlcNAc-L-Asn. Likewise, has no activity toward glutamine.</text>
</comment>
<comment type="catalytic activity">
    <reaction evidence="2">
        <text>L-asparagine + H2O = L-aspartate + NH4(+)</text>
        <dbReference type="Rhea" id="RHEA:21016"/>
        <dbReference type="ChEBI" id="CHEBI:15377"/>
        <dbReference type="ChEBI" id="CHEBI:28938"/>
        <dbReference type="ChEBI" id="CHEBI:29991"/>
        <dbReference type="ChEBI" id="CHEBI:58048"/>
        <dbReference type="EC" id="3.5.1.1"/>
    </reaction>
</comment>
<comment type="catalytic activity">
    <reaction evidence="2">
        <text>Cleavage of a beta-linked Asp residue from the N-terminus of a polypeptide.</text>
        <dbReference type="EC" id="3.4.19.5"/>
    </reaction>
</comment>
<comment type="subunit">
    <text evidence="1">Heterodimer of an alpha and beta chain produced by autocleavage.</text>
</comment>
<comment type="subcellular location">
    <subcellularLocation>
        <location evidence="2">Cytoplasm</location>
    </subcellularLocation>
</comment>
<comment type="PTM">
    <text evidence="1">Cleaved into an alpha and beta chain by autocatalysis; this activates the enzyme. The N-terminal residue of the beta subunit is responsible for the nucleophile hydrolase activity.</text>
</comment>
<comment type="similarity">
    <text evidence="3">Belongs to the Ntn-hydrolase family.</text>
</comment>
<evidence type="ECO:0000250" key="1"/>
<evidence type="ECO:0000250" key="2">
    <source>
        <dbReference type="UniProtKB" id="Q7L266"/>
    </source>
</evidence>
<evidence type="ECO:0000305" key="3"/>
<reference key="1">
    <citation type="submission" date="2004-06" db="EMBL/GenBank/DDBJ databases">
        <authorList>
            <consortium name="NIH - Xenopus Gene Collection (XGC) project"/>
        </authorList>
    </citation>
    <scope>NUCLEOTIDE SEQUENCE [LARGE SCALE MRNA]</scope>
    <source>
        <tissue>Kidney</tissue>
    </source>
</reference>
<proteinExistence type="evidence at transcript level"/>
<sequence>MKPVIVVHGGAGKIVEELDATYRAGVKRAVLKGYDVLSQGGSALTAVEEAVIVLEDEQIFNAGHGSVLNEKGDIEMDAIIMDGKNLDSGAVSAIRNIANPIKLARLVMEKTDHMLLTCEGATLFAKAQGIPEVPNESLVTERSRKRWMKNLKENSNPVADQIGLGTVGAVAIDCEGNVACATSTGGLTNKMVGRVGDTACIGSGGYADNNVGAVSTTGHGESIMKVILARLILHHMEQGKSPEEAADAGLNYMKSRVGGIGGVIIVNSSGDWTAKFSTNQMSWAAVKDDQLHIGIYHGENNVTPLEKAL</sequence>
<accession>Q6GM78</accession>
<gene>
    <name type="primary">asrgl1</name>
</gene>
<protein>
    <recommendedName>
        <fullName>Isoaspartyl peptidase/L-asparaginase</fullName>
        <ecNumber evidence="2">3.4.19.5</ecNumber>
        <ecNumber evidence="2">3.5.1.1</ecNumber>
    </recommendedName>
    <alternativeName>
        <fullName>Asparaginase-like protein 1</fullName>
    </alternativeName>
    <alternativeName>
        <fullName>Beta-aspartyl-peptidase</fullName>
    </alternativeName>
    <alternativeName>
        <fullName>Isoaspartyl dipeptidase</fullName>
    </alternativeName>
    <alternativeName>
        <fullName>L-asparagine amidohydrolase</fullName>
    </alternativeName>
    <component>
        <recommendedName>
            <fullName>Isoaspartyl peptidase/L-asparaginase alpha chain</fullName>
        </recommendedName>
    </component>
    <component>
        <recommendedName>
            <fullName>Isoaspartyl peptidase/L-asparaginase beta chain</fullName>
        </recommendedName>
    </component>
</protein>
<organism>
    <name type="scientific">Xenopus laevis</name>
    <name type="common">African clawed frog</name>
    <dbReference type="NCBI Taxonomy" id="8355"/>
    <lineage>
        <taxon>Eukaryota</taxon>
        <taxon>Metazoa</taxon>
        <taxon>Chordata</taxon>
        <taxon>Craniata</taxon>
        <taxon>Vertebrata</taxon>
        <taxon>Euteleostomi</taxon>
        <taxon>Amphibia</taxon>
        <taxon>Batrachia</taxon>
        <taxon>Anura</taxon>
        <taxon>Pipoidea</taxon>
        <taxon>Pipidae</taxon>
        <taxon>Xenopodinae</taxon>
        <taxon>Xenopus</taxon>
        <taxon>Xenopus</taxon>
    </lineage>
</organism>
<feature type="chain" id="PRO_0000420565" description="Isoaspartyl peptidase/L-asparaginase alpha chain">
    <location>
        <begin position="1"/>
        <end position="165"/>
    </location>
</feature>
<feature type="chain" id="PRO_0000420566" description="Isoaspartyl peptidase/L-asparaginase beta chain">
    <location>
        <begin position="166"/>
        <end position="309"/>
    </location>
</feature>
<feature type="active site" description="Nucleophile" evidence="1">
    <location>
        <position position="166"/>
    </location>
</feature>
<feature type="binding site" evidence="1">
    <location>
        <begin position="194"/>
        <end position="197"/>
    </location>
    <ligand>
        <name>substrate</name>
    </ligand>
</feature>
<feature type="binding site" evidence="1">
    <location>
        <begin position="217"/>
        <end position="220"/>
    </location>
    <ligand>
        <name>substrate</name>
    </ligand>
</feature>
<keyword id="KW-0068">Autocatalytic cleavage</keyword>
<keyword id="KW-0963">Cytoplasm</keyword>
<keyword id="KW-0378">Hydrolase</keyword>
<keyword id="KW-0645">Protease</keyword>
<keyword id="KW-1185">Reference proteome</keyword>